<name>NRDR_YERPS</name>
<dbReference type="EMBL" id="BX936398">
    <property type="protein sequence ID" value="CAH20173.1"/>
    <property type="molecule type" value="Genomic_DNA"/>
</dbReference>
<dbReference type="RefSeq" id="WP_002208668.1">
    <property type="nucleotide sequence ID" value="NZ_CP009712.1"/>
</dbReference>
<dbReference type="SMR" id="Q66DW0"/>
<dbReference type="GeneID" id="57975529"/>
<dbReference type="KEGG" id="ypo:BZ17_1613"/>
<dbReference type="KEGG" id="yps:YPTB0933"/>
<dbReference type="PATRIC" id="fig|273123.14.peg.1711"/>
<dbReference type="Proteomes" id="UP000001011">
    <property type="component" value="Chromosome"/>
</dbReference>
<dbReference type="GO" id="GO:0005524">
    <property type="term" value="F:ATP binding"/>
    <property type="evidence" value="ECO:0007669"/>
    <property type="project" value="UniProtKB-KW"/>
</dbReference>
<dbReference type="GO" id="GO:0003677">
    <property type="term" value="F:DNA binding"/>
    <property type="evidence" value="ECO:0007669"/>
    <property type="project" value="UniProtKB-KW"/>
</dbReference>
<dbReference type="GO" id="GO:0008270">
    <property type="term" value="F:zinc ion binding"/>
    <property type="evidence" value="ECO:0007669"/>
    <property type="project" value="UniProtKB-UniRule"/>
</dbReference>
<dbReference type="GO" id="GO:0045892">
    <property type="term" value="P:negative regulation of DNA-templated transcription"/>
    <property type="evidence" value="ECO:0007669"/>
    <property type="project" value="UniProtKB-UniRule"/>
</dbReference>
<dbReference type="HAMAP" id="MF_00440">
    <property type="entry name" value="NrdR"/>
    <property type="match status" value="1"/>
</dbReference>
<dbReference type="InterPro" id="IPR005144">
    <property type="entry name" value="ATP-cone_dom"/>
</dbReference>
<dbReference type="InterPro" id="IPR055173">
    <property type="entry name" value="NrdR-like_N"/>
</dbReference>
<dbReference type="InterPro" id="IPR003796">
    <property type="entry name" value="RNR_NrdR-like"/>
</dbReference>
<dbReference type="NCBIfam" id="TIGR00244">
    <property type="entry name" value="transcriptional regulator NrdR"/>
    <property type="match status" value="1"/>
</dbReference>
<dbReference type="PANTHER" id="PTHR30455">
    <property type="entry name" value="TRANSCRIPTIONAL REPRESSOR NRDR"/>
    <property type="match status" value="1"/>
</dbReference>
<dbReference type="PANTHER" id="PTHR30455:SF2">
    <property type="entry name" value="TRANSCRIPTIONAL REPRESSOR NRDR"/>
    <property type="match status" value="1"/>
</dbReference>
<dbReference type="Pfam" id="PF03477">
    <property type="entry name" value="ATP-cone"/>
    <property type="match status" value="1"/>
</dbReference>
<dbReference type="Pfam" id="PF22811">
    <property type="entry name" value="Zn_ribbon_NrdR"/>
    <property type="match status" value="1"/>
</dbReference>
<dbReference type="PROSITE" id="PS51161">
    <property type="entry name" value="ATP_CONE"/>
    <property type="match status" value="1"/>
</dbReference>
<reference key="1">
    <citation type="journal article" date="2004" name="Proc. Natl. Acad. Sci. U.S.A.">
        <title>Insights into the evolution of Yersinia pestis through whole-genome comparison with Yersinia pseudotuberculosis.</title>
        <authorList>
            <person name="Chain P.S.G."/>
            <person name="Carniel E."/>
            <person name="Larimer F.W."/>
            <person name="Lamerdin J."/>
            <person name="Stoutland P.O."/>
            <person name="Regala W.M."/>
            <person name="Georgescu A.M."/>
            <person name="Vergez L.M."/>
            <person name="Land M.L."/>
            <person name="Motin V.L."/>
            <person name="Brubaker R.R."/>
            <person name="Fowler J."/>
            <person name="Hinnebusch J."/>
            <person name="Marceau M."/>
            <person name="Medigue C."/>
            <person name="Simonet M."/>
            <person name="Chenal-Francisque V."/>
            <person name="Souza B."/>
            <person name="Dacheux D."/>
            <person name="Elliott J.M."/>
            <person name="Derbise A."/>
            <person name="Hauser L.J."/>
            <person name="Garcia E."/>
        </authorList>
    </citation>
    <scope>NUCLEOTIDE SEQUENCE [LARGE SCALE GENOMIC DNA]</scope>
    <source>
        <strain>IP32953</strain>
    </source>
</reference>
<feature type="chain" id="PRO_0000182386" description="Transcriptional repressor NrdR">
    <location>
        <begin position="1"/>
        <end position="149"/>
    </location>
</feature>
<feature type="domain" description="ATP-cone" evidence="1">
    <location>
        <begin position="49"/>
        <end position="139"/>
    </location>
</feature>
<feature type="zinc finger region" evidence="1">
    <location>
        <begin position="3"/>
        <end position="34"/>
    </location>
</feature>
<organism>
    <name type="scientific">Yersinia pseudotuberculosis serotype I (strain IP32953)</name>
    <dbReference type="NCBI Taxonomy" id="273123"/>
    <lineage>
        <taxon>Bacteria</taxon>
        <taxon>Pseudomonadati</taxon>
        <taxon>Pseudomonadota</taxon>
        <taxon>Gammaproteobacteria</taxon>
        <taxon>Enterobacterales</taxon>
        <taxon>Yersiniaceae</taxon>
        <taxon>Yersinia</taxon>
    </lineage>
</organism>
<accession>Q66DW0</accession>
<evidence type="ECO:0000255" key="1">
    <source>
        <dbReference type="HAMAP-Rule" id="MF_00440"/>
    </source>
</evidence>
<keyword id="KW-0067">ATP-binding</keyword>
<keyword id="KW-0238">DNA-binding</keyword>
<keyword id="KW-0479">Metal-binding</keyword>
<keyword id="KW-0547">Nucleotide-binding</keyword>
<keyword id="KW-0678">Repressor</keyword>
<keyword id="KW-0804">Transcription</keyword>
<keyword id="KW-0805">Transcription regulation</keyword>
<keyword id="KW-0862">Zinc</keyword>
<keyword id="KW-0863">Zinc-finger</keyword>
<gene>
    <name evidence="1" type="primary">nrdR</name>
    <name type="ordered locus">YPTB0933</name>
</gene>
<protein>
    <recommendedName>
        <fullName evidence="1">Transcriptional repressor NrdR</fullName>
    </recommendedName>
</protein>
<sequence length="149" mass="17205">MHCPFCAAVDTKVIDSRLVSDGSQVRRRRQCLDCNERFTTFEVAELVLPRVIKSDEVREPFNEEKLRRGMLKALEKRPVSSDDVETAISHIKSQLRATGEREVPTKMVGNLVMEALKRLDKVAYIRFASVYRSFEDVREFGEEIARLQD</sequence>
<proteinExistence type="inferred from homology"/>
<comment type="function">
    <text evidence="1">Negatively regulates transcription of bacterial ribonucleotide reductase nrd genes and operons by binding to NrdR-boxes.</text>
</comment>
<comment type="cofactor">
    <cofactor evidence="1">
        <name>Zn(2+)</name>
        <dbReference type="ChEBI" id="CHEBI:29105"/>
    </cofactor>
    <text evidence="1">Binds 1 zinc ion.</text>
</comment>
<comment type="similarity">
    <text evidence="1">Belongs to the NrdR family.</text>
</comment>